<keyword id="KW-0158">Chromosome</keyword>
<keyword id="KW-0963">Cytoplasm</keyword>
<keyword id="KW-0489">Methyltransferase</keyword>
<keyword id="KW-0539">Nucleus</keyword>
<keyword id="KW-1185">Reference proteome</keyword>
<keyword id="KW-0949">S-adenosyl-L-methionine</keyword>
<keyword id="KW-0808">Transferase</keyword>
<comment type="function">
    <text evidence="1">Histone methyltransferase that monomethylates 'Lys-5', 'Lys-8' and 'Lys-12' of histone H4 (H4K5me1, H4K8me1 and H4K12me1, respectively), thereby controlling gene expression and remodeling chromatin structures.</text>
</comment>
<comment type="catalytic activity">
    <reaction evidence="1">
        <text>L-lysyl-[histone] + S-adenosyl-L-methionine = N(6)-methyl-L-lysyl-[histone] + S-adenosyl-L-homocysteine + H(+)</text>
        <dbReference type="Rhea" id="RHEA:10024"/>
        <dbReference type="Rhea" id="RHEA-COMP:9845"/>
        <dbReference type="Rhea" id="RHEA-COMP:9846"/>
        <dbReference type="ChEBI" id="CHEBI:15378"/>
        <dbReference type="ChEBI" id="CHEBI:29969"/>
        <dbReference type="ChEBI" id="CHEBI:57856"/>
        <dbReference type="ChEBI" id="CHEBI:59789"/>
        <dbReference type="ChEBI" id="CHEBI:61929"/>
    </reaction>
    <physiologicalReaction direction="left-to-right" evidence="1">
        <dbReference type="Rhea" id="RHEA:10025"/>
    </physiologicalReaction>
</comment>
<comment type="subcellular location">
    <subcellularLocation>
        <location evidence="1">Nucleus</location>
    </subcellularLocation>
    <subcellularLocation>
        <location evidence="1">Chromosome</location>
    </subcellularLocation>
    <subcellularLocation>
        <location evidence="1">Cytoplasm</location>
    </subcellularLocation>
</comment>
<comment type="similarity">
    <text evidence="2">Belongs to the class V-like SAM-binding methyltransferase superfamily. Histone-lysine methyltransferase family. SET5 subfamily.</text>
</comment>
<sequence length="449" mass="50784">MTDLTAEAAISPSDDILLPALASLREGHPDKGILKLLAQLKIDHPEWAVSEKRFRKALQLAPCPGGGEADPKEKALVADTGLDPSIDVKSIAPKVEVKMFAGGKGKGLVAKEELKQGEMLWQEEPWIVTSDPGHYSLLTQSMMCSQCFSLFARPSPPLSVPCPHCTTAHFCNRLCYTKSLSSSHPPLLCPGLNPDASSLMNFIRKRGERSVEGVAKILARWRGEREWDAKGKAEEMEKRIWKGMARVSQKRKEMERREWSYISKARMEEWHLIHIMLTNVLNPSPTHENYKPFQRLLISQHPRRSKPVPLTEKEVKRWFSFESFLELLGLVGLNQEDSGGLYALHAHMNHSCEPNIQVRNLPKSYTPPTQDTLPVNLPPPIQAGDRVSNKLTILARHEIQPGEELTISYVNMKMSRDERRQALREGYGFWCACDRCMREKEQPNGEKAE</sequence>
<gene>
    <name type="primary">SET5</name>
    <name type="ordered locus">CNB03780</name>
</gene>
<reference key="1">
    <citation type="journal article" date="2005" name="Science">
        <title>The genome of the basidiomycetous yeast and human pathogen Cryptococcus neoformans.</title>
        <authorList>
            <person name="Loftus B.J."/>
            <person name="Fung E."/>
            <person name="Roncaglia P."/>
            <person name="Rowley D."/>
            <person name="Amedeo P."/>
            <person name="Bruno D."/>
            <person name="Vamathevan J."/>
            <person name="Miranda M."/>
            <person name="Anderson I.J."/>
            <person name="Fraser J.A."/>
            <person name="Allen J.E."/>
            <person name="Bosdet I.E."/>
            <person name="Brent M.R."/>
            <person name="Chiu R."/>
            <person name="Doering T.L."/>
            <person name="Donlin M.J."/>
            <person name="D'Souza C.A."/>
            <person name="Fox D.S."/>
            <person name="Grinberg V."/>
            <person name="Fu J."/>
            <person name="Fukushima M."/>
            <person name="Haas B.J."/>
            <person name="Huang J.C."/>
            <person name="Janbon G."/>
            <person name="Jones S.J.M."/>
            <person name="Koo H.L."/>
            <person name="Krzywinski M.I."/>
            <person name="Kwon-Chung K.J."/>
            <person name="Lengeler K.B."/>
            <person name="Maiti R."/>
            <person name="Marra M.A."/>
            <person name="Marra R.E."/>
            <person name="Mathewson C.A."/>
            <person name="Mitchell T.G."/>
            <person name="Pertea M."/>
            <person name="Riggs F.R."/>
            <person name="Salzberg S.L."/>
            <person name="Schein J.E."/>
            <person name="Shvartsbeyn A."/>
            <person name="Shin H."/>
            <person name="Shumway M."/>
            <person name="Specht C.A."/>
            <person name="Suh B.B."/>
            <person name="Tenney A."/>
            <person name="Utterback T.R."/>
            <person name="Wickes B.L."/>
            <person name="Wortman J.R."/>
            <person name="Wye N.H."/>
            <person name="Kronstad J.W."/>
            <person name="Lodge J.K."/>
            <person name="Heitman J."/>
            <person name="Davis R.W."/>
            <person name="Fraser C.M."/>
            <person name="Hyman R.W."/>
        </authorList>
    </citation>
    <scope>NUCLEOTIDE SEQUENCE [LARGE SCALE GENOMIC DNA]</scope>
    <source>
        <strain>JEC21 / ATCC MYA-565</strain>
    </source>
</reference>
<accession>P0CR42</accession>
<accession>Q55Y21</accession>
<accession>Q5KLW8</accession>
<name>SET5_CRYNJ</name>
<protein>
    <recommendedName>
        <fullName>Histone-lysine N-methyltransferase SET5</fullName>
        <ecNumber evidence="1">2.1.1.-</ecNumber>
    </recommendedName>
    <alternativeName>
        <fullName>SET domain-containing protein 5</fullName>
    </alternativeName>
</protein>
<dbReference type="EC" id="2.1.1.-" evidence="1"/>
<dbReference type="EMBL" id="AE017342">
    <property type="protein sequence ID" value="AAW41903.1"/>
    <property type="molecule type" value="Genomic_DNA"/>
</dbReference>
<dbReference type="RefSeq" id="XP_569210.1">
    <property type="nucleotide sequence ID" value="XM_569210.1"/>
</dbReference>
<dbReference type="STRING" id="214684.P0CR42"/>
<dbReference type="PaxDb" id="214684-P0CR42"/>
<dbReference type="EnsemblFungi" id="AAW41903">
    <property type="protein sequence ID" value="AAW41903"/>
    <property type="gene ID" value="CNB03780"/>
</dbReference>
<dbReference type="GeneID" id="3255780"/>
<dbReference type="KEGG" id="cne:CNB03780"/>
<dbReference type="VEuPathDB" id="FungiDB:CNB03780"/>
<dbReference type="eggNOG" id="KOG2084">
    <property type="taxonomic scope" value="Eukaryota"/>
</dbReference>
<dbReference type="HOGENOM" id="CLU_031650_0_0_1"/>
<dbReference type="InParanoid" id="P0CR42"/>
<dbReference type="OMA" id="CEPNVRY"/>
<dbReference type="OrthoDB" id="438641at2759"/>
<dbReference type="Proteomes" id="UP000002149">
    <property type="component" value="Chromosome 2"/>
</dbReference>
<dbReference type="GO" id="GO:0005694">
    <property type="term" value="C:chromosome"/>
    <property type="evidence" value="ECO:0007669"/>
    <property type="project" value="UniProtKB-SubCell"/>
</dbReference>
<dbReference type="GO" id="GO:0005737">
    <property type="term" value="C:cytoplasm"/>
    <property type="evidence" value="ECO:0007669"/>
    <property type="project" value="UniProtKB-SubCell"/>
</dbReference>
<dbReference type="GO" id="GO:0005634">
    <property type="term" value="C:nucleus"/>
    <property type="evidence" value="ECO:0007669"/>
    <property type="project" value="UniProtKB-SubCell"/>
</dbReference>
<dbReference type="GO" id="GO:0042799">
    <property type="term" value="F:histone H4K20 methyltransferase activity"/>
    <property type="evidence" value="ECO:0000318"/>
    <property type="project" value="GO_Central"/>
</dbReference>
<dbReference type="GO" id="GO:0032259">
    <property type="term" value="P:methylation"/>
    <property type="evidence" value="ECO:0007669"/>
    <property type="project" value="UniProtKB-KW"/>
</dbReference>
<dbReference type="GO" id="GO:0045814">
    <property type="term" value="P:negative regulation of gene expression, epigenetic"/>
    <property type="evidence" value="ECO:0000318"/>
    <property type="project" value="GO_Central"/>
</dbReference>
<dbReference type="CDD" id="cd20071">
    <property type="entry name" value="SET_SMYD"/>
    <property type="match status" value="1"/>
</dbReference>
<dbReference type="Gene3D" id="1.10.220.160">
    <property type="match status" value="1"/>
</dbReference>
<dbReference type="Gene3D" id="6.10.140.2220">
    <property type="match status" value="1"/>
</dbReference>
<dbReference type="Gene3D" id="2.170.270.10">
    <property type="entry name" value="SET domain"/>
    <property type="match status" value="1"/>
</dbReference>
<dbReference type="InterPro" id="IPR001214">
    <property type="entry name" value="SET_dom"/>
</dbReference>
<dbReference type="InterPro" id="IPR046341">
    <property type="entry name" value="SET_dom_sf"/>
</dbReference>
<dbReference type="PANTHER" id="PTHR46402:SF2">
    <property type="entry name" value="HISTONE-LYSINE N-TRIMETHYLTRANSFERASE SMYD5"/>
    <property type="match status" value="1"/>
</dbReference>
<dbReference type="PANTHER" id="PTHR46402">
    <property type="entry name" value="SET AND MYND DOMAIN-CONTAINING PROTEIN 5"/>
    <property type="match status" value="1"/>
</dbReference>
<dbReference type="Pfam" id="PF00856">
    <property type="entry name" value="SET"/>
    <property type="match status" value="1"/>
</dbReference>
<dbReference type="SUPFAM" id="SSF82199">
    <property type="entry name" value="SET domain"/>
    <property type="match status" value="1"/>
</dbReference>
<dbReference type="PROSITE" id="PS50280">
    <property type="entry name" value="SET"/>
    <property type="match status" value="1"/>
</dbReference>
<feature type="chain" id="PRO_0000324467" description="Histone-lysine N-methyltransferase SET5">
    <location>
        <begin position="1"/>
        <end position="449"/>
    </location>
</feature>
<feature type="domain" description="SET" evidence="2">
    <location>
        <begin position="93"/>
        <end position="410"/>
    </location>
</feature>
<evidence type="ECO:0000250" key="1">
    <source>
        <dbReference type="UniProtKB" id="P38890"/>
    </source>
</evidence>
<evidence type="ECO:0000255" key="2">
    <source>
        <dbReference type="PROSITE-ProRule" id="PRU00190"/>
    </source>
</evidence>
<proteinExistence type="inferred from homology"/>
<organism>
    <name type="scientific">Cryptococcus neoformans var. neoformans serotype D (strain JEC21 / ATCC MYA-565)</name>
    <name type="common">Filobasidiella neoformans</name>
    <dbReference type="NCBI Taxonomy" id="214684"/>
    <lineage>
        <taxon>Eukaryota</taxon>
        <taxon>Fungi</taxon>
        <taxon>Dikarya</taxon>
        <taxon>Basidiomycota</taxon>
        <taxon>Agaricomycotina</taxon>
        <taxon>Tremellomycetes</taxon>
        <taxon>Tremellales</taxon>
        <taxon>Cryptococcaceae</taxon>
        <taxon>Cryptococcus</taxon>
        <taxon>Cryptococcus neoformans species complex</taxon>
    </lineage>
</organism>